<dbReference type="EC" id="1.14.-.-"/>
<dbReference type="EMBL" id="AE003849">
    <property type="protein sequence ID" value="AAF83187.1"/>
    <property type="molecule type" value="Genomic_DNA"/>
</dbReference>
<dbReference type="PIR" id="H82813">
    <property type="entry name" value="H82813"/>
</dbReference>
<dbReference type="RefSeq" id="WP_010892908.1">
    <property type="nucleotide sequence ID" value="NC_002488.3"/>
</dbReference>
<dbReference type="SMR" id="Q9PGC5"/>
<dbReference type="STRING" id="160492.XF_0377"/>
<dbReference type="KEGG" id="xfa:XF_0377"/>
<dbReference type="eggNOG" id="COG2124">
    <property type="taxonomic scope" value="Bacteria"/>
</dbReference>
<dbReference type="HOGENOM" id="CLU_033716_2_0_6"/>
<dbReference type="Proteomes" id="UP000000812">
    <property type="component" value="Chromosome"/>
</dbReference>
<dbReference type="GO" id="GO:0020037">
    <property type="term" value="F:heme binding"/>
    <property type="evidence" value="ECO:0007669"/>
    <property type="project" value="InterPro"/>
</dbReference>
<dbReference type="GO" id="GO:0005506">
    <property type="term" value="F:iron ion binding"/>
    <property type="evidence" value="ECO:0007669"/>
    <property type="project" value="InterPro"/>
</dbReference>
<dbReference type="GO" id="GO:0004497">
    <property type="term" value="F:monooxygenase activity"/>
    <property type="evidence" value="ECO:0007669"/>
    <property type="project" value="UniProtKB-KW"/>
</dbReference>
<dbReference type="GO" id="GO:0016705">
    <property type="term" value="F:oxidoreductase activity, acting on paired donors, with incorporation or reduction of molecular oxygen"/>
    <property type="evidence" value="ECO:0007669"/>
    <property type="project" value="InterPro"/>
</dbReference>
<dbReference type="CDD" id="cd20625">
    <property type="entry name" value="CYP164-like"/>
    <property type="match status" value="1"/>
</dbReference>
<dbReference type="FunFam" id="1.10.630.10:FF:000018">
    <property type="entry name" value="Cytochrome P450 monooxygenase"/>
    <property type="match status" value="1"/>
</dbReference>
<dbReference type="Gene3D" id="1.10.630.10">
    <property type="entry name" value="Cytochrome P450"/>
    <property type="match status" value="1"/>
</dbReference>
<dbReference type="InterPro" id="IPR001128">
    <property type="entry name" value="Cyt_P450"/>
</dbReference>
<dbReference type="InterPro" id="IPR002397">
    <property type="entry name" value="Cyt_P450_B"/>
</dbReference>
<dbReference type="InterPro" id="IPR017972">
    <property type="entry name" value="Cyt_P450_CS"/>
</dbReference>
<dbReference type="InterPro" id="IPR036396">
    <property type="entry name" value="Cyt_P450_sf"/>
</dbReference>
<dbReference type="PANTHER" id="PTHR46696:SF1">
    <property type="entry name" value="CYTOCHROME P450 YJIB-RELATED"/>
    <property type="match status" value="1"/>
</dbReference>
<dbReference type="PANTHER" id="PTHR46696">
    <property type="entry name" value="P450, PUTATIVE (EUROFUNG)-RELATED"/>
    <property type="match status" value="1"/>
</dbReference>
<dbReference type="Pfam" id="PF00067">
    <property type="entry name" value="p450"/>
    <property type="match status" value="1"/>
</dbReference>
<dbReference type="PRINTS" id="PR00359">
    <property type="entry name" value="BP450"/>
</dbReference>
<dbReference type="SUPFAM" id="SSF48264">
    <property type="entry name" value="Cytochrome P450"/>
    <property type="match status" value="1"/>
</dbReference>
<dbReference type="PROSITE" id="PS00086">
    <property type="entry name" value="CYTOCHROME_P450"/>
    <property type="match status" value="1"/>
</dbReference>
<comment type="cofactor">
    <cofactor evidence="1">
        <name>heme</name>
        <dbReference type="ChEBI" id="CHEBI:30413"/>
    </cofactor>
</comment>
<comment type="similarity">
    <text evidence="2">Belongs to the cytochrome P450 family.</text>
</comment>
<name>C1331_XYLFA</name>
<sequence>MKLTDLSNPAFLENPYPLYETLRAQAPFVSIGPNALMTGRYSLVDSLLHNRNMGKKYMESMRVRYGDSAADMPLFQAFSRMFITINPPAHTHLRGLVMQAFTGRESESMRPLAIDTAHQLIDNFEQKPSVDLVAEFAFPFPMQIICKMMDVDIGDAVTLGIAVSKIAKVFDPSPMSADELVHASTAYEELAQYFTKLIELRRTHPGTDLISMFLRAEEDGEKLTHDEIVSNVIMLLIAGYETTSNMIGNALIALHRHPEQLALLKSDLSLMPQAVSECLRYDGSVQFTMRAAMDDIEVEGELVPRGTVVFLMLGAANRDPAQFTHPDQLDITRKQGRLQSFGAGIHHCLGYRLALIELECALTTLFERLPHLRLAHLDALNWNQRSNLRGVNTLIVDLHAKN</sequence>
<gene>
    <name type="primary">cyp133B1</name>
    <name type="ordered locus">XF_0377</name>
</gene>
<proteinExistence type="inferred from homology"/>
<reference key="1">
    <citation type="journal article" date="2000" name="Nature">
        <title>The genome sequence of the plant pathogen Xylella fastidiosa.</title>
        <authorList>
            <person name="Simpson A.J.G."/>
            <person name="Reinach F.C."/>
            <person name="Arruda P."/>
            <person name="Abreu F.A."/>
            <person name="Acencio M."/>
            <person name="Alvarenga R."/>
            <person name="Alves L.M.C."/>
            <person name="Araya J.E."/>
            <person name="Baia G.S."/>
            <person name="Baptista C.S."/>
            <person name="Barros M.H."/>
            <person name="Bonaccorsi E.D."/>
            <person name="Bordin S."/>
            <person name="Bove J.M."/>
            <person name="Briones M.R.S."/>
            <person name="Bueno M.R.P."/>
            <person name="Camargo A.A."/>
            <person name="Camargo L.E.A."/>
            <person name="Carraro D.M."/>
            <person name="Carrer H."/>
            <person name="Colauto N.B."/>
            <person name="Colombo C."/>
            <person name="Costa F.F."/>
            <person name="Costa M.C.R."/>
            <person name="Costa-Neto C.M."/>
            <person name="Coutinho L.L."/>
            <person name="Cristofani M."/>
            <person name="Dias-Neto E."/>
            <person name="Docena C."/>
            <person name="El-Dorry H."/>
            <person name="Facincani A.P."/>
            <person name="Ferreira A.J.S."/>
            <person name="Ferreira V.C.A."/>
            <person name="Ferro J.A."/>
            <person name="Fraga J.S."/>
            <person name="Franca S.C."/>
            <person name="Franco M.C."/>
            <person name="Frohme M."/>
            <person name="Furlan L.R."/>
            <person name="Garnier M."/>
            <person name="Goldman G.H."/>
            <person name="Goldman M.H.S."/>
            <person name="Gomes S.L."/>
            <person name="Gruber A."/>
            <person name="Ho P.L."/>
            <person name="Hoheisel J.D."/>
            <person name="Junqueira M.L."/>
            <person name="Kemper E.L."/>
            <person name="Kitajima J.P."/>
            <person name="Krieger J.E."/>
            <person name="Kuramae E.E."/>
            <person name="Laigret F."/>
            <person name="Lambais M.R."/>
            <person name="Leite L.C.C."/>
            <person name="Lemos E.G.M."/>
            <person name="Lemos M.V.F."/>
            <person name="Lopes S.A."/>
            <person name="Lopes C.R."/>
            <person name="Machado J.A."/>
            <person name="Machado M.A."/>
            <person name="Madeira A.M.B.N."/>
            <person name="Madeira H.M.F."/>
            <person name="Marino C.L."/>
            <person name="Marques M.V."/>
            <person name="Martins E.A.L."/>
            <person name="Martins E.M.F."/>
            <person name="Matsukuma A.Y."/>
            <person name="Menck C.F.M."/>
            <person name="Miracca E.C."/>
            <person name="Miyaki C.Y."/>
            <person name="Monteiro-Vitorello C.B."/>
            <person name="Moon D.H."/>
            <person name="Nagai M.A."/>
            <person name="Nascimento A.L.T.O."/>
            <person name="Netto L.E.S."/>
            <person name="Nhani A. Jr."/>
            <person name="Nobrega F.G."/>
            <person name="Nunes L.R."/>
            <person name="Oliveira M.A."/>
            <person name="de Oliveira M.C."/>
            <person name="de Oliveira R.C."/>
            <person name="Palmieri D.A."/>
            <person name="Paris A."/>
            <person name="Peixoto B.R."/>
            <person name="Pereira G.A.G."/>
            <person name="Pereira H.A. Jr."/>
            <person name="Pesquero J.B."/>
            <person name="Quaggio R.B."/>
            <person name="Roberto P.G."/>
            <person name="Rodrigues V."/>
            <person name="de Rosa A.J.M."/>
            <person name="de Rosa V.E. Jr."/>
            <person name="de Sa R.G."/>
            <person name="Santelli R.V."/>
            <person name="Sawasaki H.E."/>
            <person name="da Silva A.C.R."/>
            <person name="da Silva A.M."/>
            <person name="da Silva F.R."/>
            <person name="Silva W.A. Jr."/>
            <person name="da Silveira J.F."/>
            <person name="Silvestri M.L.Z."/>
            <person name="Siqueira W.J."/>
            <person name="de Souza A.A."/>
            <person name="de Souza A.P."/>
            <person name="Terenzi M.F."/>
            <person name="Truffi D."/>
            <person name="Tsai S.M."/>
            <person name="Tsuhako M.H."/>
            <person name="Vallada H."/>
            <person name="Van Sluys M.A."/>
            <person name="Verjovski-Almeida S."/>
            <person name="Vettore A.L."/>
            <person name="Zago M.A."/>
            <person name="Zatz M."/>
            <person name="Meidanis J."/>
            <person name="Setubal J.C."/>
        </authorList>
    </citation>
    <scope>NUCLEOTIDE SEQUENCE [LARGE SCALE GENOMIC DNA]</scope>
    <source>
        <strain>9a5c</strain>
    </source>
</reference>
<accession>Q9PGC5</accession>
<evidence type="ECO:0000250" key="1"/>
<evidence type="ECO:0000305" key="2"/>
<keyword id="KW-0349">Heme</keyword>
<keyword id="KW-0408">Iron</keyword>
<keyword id="KW-0479">Metal-binding</keyword>
<keyword id="KW-0503">Monooxygenase</keyword>
<keyword id="KW-0560">Oxidoreductase</keyword>
<feature type="chain" id="PRO_0000052288" description="Putative cytochrome P450 133B1">
    <location>
        <begin position="1"/>
        <end position="402"/>
    </location>
</feature>
<feature type="binding site" description="axial binding residue" evidence="1">
    <location>
        <position position="348"/>
    </location>
    <ligand>
        <name>heme</name>
        <dbReference type="ChEBI" id="CHEBI:30413"/>
    </ligand>
    <ligandPart>
        <name>Fe</name>
        <dbReference type="ChEBI" id="CHEBI:18248"/>
    </ligandPart>
</feature>
<protein>
    <recommendedName>
        <fullName>Putative cytochrome P450 133B1</fullName>
        <ecNumber>1.14.-.-</ecNumber>
    </recommendedName>
</protein>
<organism>
    <name type="scientific">Xylella fastidiosa (strain 9a5c)</name>
    <dbReference type="NCBI Taxonomy" id="160492"/>
    <lineage>
        <taxon>Bacteria</taxon>
        <taxon>Pseudomonadati</taxon>
        <taxon>Pseudomonadota</taxon>
        <taxon>Gammaproteobacteria</taxon>
        <taxon>Lysobacterales</taxon>
        <taxon>Lysobacteraceae</taxon>
        <taxon>Xylella</taxon>
    </lineage>
</organism>